<organism>
    <name type="scientific">Rhizobium leguminosarum bv. trifolii (strain WSM2304)</name>
    <dbReference type="NCBI Taxonomy" id="395492"/>
    <lineage>
        <taxon>Bacteria</taxon>
        <taxon>Pseudomonadati</taxon>
        <taxon>Pseudomonadota</taxon>
        <taxon>Alphaproteobacteria</taxon>
        <taxon>Hyphomicrobiales</taxon>
        <taxon>Rhizobiaceae</taxon>
        <taxon>Rhizobium/Agrobacterium group</taxon>
        <taxon>Rhizobium</taxon>
    </lineage>
</organism>
<dbReference type="EC" id="2.1.1.170" evidence="1"/>
<dbReference type="EMBL" id="CP001191">
    <property type="protein sequence ID" value="ACI57191.1"/>
    <property type="molecule type" value="Genomic_DNA"/>
</dbReference>
<dbReference type="RefSeq" id="WP_012559385.1">
    <property type="nucleotide sequence ID" value="NC_011369.1"/>
</dbReference>
<dbReference type="SMR" id="B5ZV45"/>
<dbReference type="STRING" id="395492.Rleg2_3929"/>
<dbReference type="KEGG" id="rlt:Rleg2_3929"/>
<dbReference type="eggNOG" id="COG0357">
    <property type="taxonomic scope" value="Bacteria"/>
</dbReference>
<dbReference type="HOGENOM" id="CLU_065341_1_1_5"/>
<dbReference type="Proteomes" id="UP000008330">
    <property type="component" value="Chromosome"/>
</dbReference>
<dbReference type="GO" id="GO:0005829">
    <property type="term" value="C:cytosol"/>
    <property type="evidence" value="ECO:0007669"/>
    <property type="project" value="TreeGrafter"/>
</dbReference>
<dbReference type="GO" id="GO:0070043">
    <property type="term" value="F:rRNA (guanine-N7-)-methyltransferase activity"/>
    <property type="evidence" value="ECO:0007669"/>
    <property type="project" value="UniProtKB-UniRule"/>
</dbReference>
<dbReference type="Gene3D" id="3.40.50.150">
    <property type="entry name" value="Vaccinia Virus protein VP39"/>
    <property type="match status" value="1"/>
</dbReference>
<dbReference type="HAMAP" id="MF_00074">
    <property type="entry name" value="16SrRNA_methyltr_G"/>
    <property type="match status" value="1"/>
</dbReference>
<dbReference type="InterPro" id="IPR003682">
    <property type="entry name" value="rRNA_ssu_MeTfrase_G"/>
</dbReference>
<dbReference type="InterPro" id="IPR029063">
    <property type="entry name" value="SAM-dependent_MTases_sf"/>
</dbReference>
<dbReference type="NCBIfam" id="TIGR00138">
    <property type="entry name" value="rsmG_gidB"/>
    <property type="match status" value="1"/>
</dbReference>
<dbReference type="PANTHER" id="PTHR31760">
    <property type="entry name" value="S-ADENOSYL-L-METHIONINE-DEPENDENT METHYLTRANSFERASES SUPERFAMILY PROTEIN"/>
    <property type="match status" value="1"/>
</dbReference>
<dbReference type="PANTHER" id="PTHR31760:SF0">
    <property type="entry name" value="S-ADENOSYL-L-METHIONINE-DEPENDENT METHYLTRANSFERASES SUPERFAMILY PROTEIN"/>
    <property type="match status" value="1"/>
</dbReference>
<dbReference type="Pfam" id="PF02527">
    <property type="entry name" value="GidB"/>
    <property type="match status" value="1"/>
</dbReference>
<dbReference type="PIRSF" id="PIRSF003078">
    <property type="entry name" value="GidB"/>
    <property type="match status" value="1"/>
</dbReference>
<dbReference type="SUPFAM" id="SSF53335">
    <property type="entry name" value="S-adenosyl-L-methionine-dependent methyltransferases"/>
    <property type="match status" value="1"/>
</dbReference>
<accession>B5ZV45</accession>
<gene>
    <name evidence="1" type="primary">rsmG</name>
    <name type="ordered locus">Rleg2_3929</name>
</gene>
<evidence type="ECO:0000255" key="1">
    <source>
        <dbReference type="HAMAP-Rule" id="MF_00074"/>
    </source>
</evidence>
<name>RSMG_RHILW</name>
<protein>
    <recommendedName>
        <fullName evidence="1">Ribosomal RNA small subunit methyltransferase G</fullName>
        <ecNumber evidence="1">2.1.1.170</ecNumber>
    </recommendedName>
    <alternativeName>
        <fullName evidence="1">16S rRNA 7-methylguanosine methyltransferase</fullName>
        <shortName evidence="1">16S rRNA m7G methyltransferase</shortName>
    </alternativeName>
</protein>
<feature type="chain" id="PRO_1000092644" description="Ribosomal RNA small subunit methyltransferase G">
    <location>
        <begin position="1"/>
        <end position="205"/>
    </location>
</feature>
<feature type="binding site" evidence="1">
    <location>
        <position position="66"/>
    </location>
    <ligand>
        <name>S-adenosyl-L-methionine</name>
        <dbReference type="ChEBI" id="CHEBI:59789"/>
    </ligand>
</feature>
<feature type="binding site" evidence="1">
    <location>
        <position position="71"/>
    </location>
    <ligand>
        <name>S-adenosyl-L-methionine</name>
        <dbReference type="ChEBI" id="CHEBI:59789"/>
    </ligand>
</feature>
<feature type="binding site" evidence="1">
    <location>
        <begin position="119"/>
        <end position="120"/>
    </location>
    <ligand>
        <name>S-adenosyl-L-methionine</name>
        <dbReference type="ChEBI" id="CHEBI:59789"/>
    </ligand>
</feature>
<feature type="binding site" evidence="1">
    <location>
        <position position="135"/>
    </location>
    <ligand>
        <name>S-adenosyl-L-methionine</name>
        <dbReference type="ChEBI" id="CHEBI:59789"/>
    </ligand>
</feature>
<proteinExistence type="inferred from homology"/>
<keyword id="KW-0963">Cytoplasm</keyword>
<keyword id="KW-0489">Methyltransferase</keyword>
<keyword id="KW-1185">Reference proteome</keyword>
<keyword id="KW-0698">rRNA processing</keyword>
<keyword id="KW-0949">S-adenosyl-L-methionine</keyword>
<keyword id="KW-0808">Transferase</keyword>
<sequence>MELNGLRVSRETQERLQHFAALFQKWAKTINLVAPSTLDDLWNRHIADSSQVFQIHPKPVIWADLGSGGGFPGVITAIFLAELQDGWVHLVESNHKKAAFLRTALRETNARGSVHSSRIEDAHAEIGECGAISARALADLDGLLEYSAPWMLGEKDCRGFFHKGRDYLREIDKARGRWEFDLLEHSSAVEQESVILEISNLRRLV</sequence>
<reference key="1">
    <citation type="journal article" date="2010" name="Stand. Genomic Sci.">
        <title>Complete genome sequence of Rhizobium leguminosarum bv trifolii strain WSM2304, an effective microsymbiont of the South American clover Trifolium polymorphum.</title>
        <authorList>
            <person name="Reeve W."/>
            <person name="O'Hara G."/>
            <person name="Chain P."/>
            <person name="Ardley J."/>
            <person name="Brau L."/>
            <person name="Nandesena K."/>
            <person name="Tiwari R."/>
            <person name="Malfatti S."/>
            <person name="Kiss H."/>
            <person name="Lapidus A."/>
            <person name="Copeland A."/>
            <person name="Nolan M."/>
            <person name="Land M."/>
            <person name="Ivanova N."/>
            <person name="Mavromatis K."/>
            <person name="Markowitz V."/>
            <person name="Kyrpides N."/>
            <person name="Melino V."/>
            <person name="Denton M."/>
            <person name="Yates R."/>
            <person name="Howieson J."/>
        </authorList>
    </citation>
    <scope>NUCLEOTIDE SEQUENCE [LARGE SCALE GENOMIC DNA]</scope>
    <source>
        <strain>WSM2304</strain>
    </source>
</reference>
<comment type="function">
    <text evidence="1">Specifically methylates the N7 position of guanine in position 527 of 16S rRNA.</text>
</comment>
<comment type="catalytic activity">
    <reaction evidence="1">
        <text>guanosine(527) in 16S rRNA + S-adenosyl-L-methionine = N(7)-methylguanosine(527) in 16S rRNA + S-adenosyl-L-homocysteine</text>
        <dbReference type="Rhea" id="RHEA:42732"/>
        <dbReference type="Rhea" id="RHEA-COMP:10209"/>
        <dbReference type="Rhea" id="RHEA-COMP:10210"/>
        <dbReference type="ChEBI" id="CHEBI:57856"/>
        <dbReference type="ChEBI" id="CHEBI:59789"/>
        <dbReference type="ChEBI" id="CHEBI:74269"/>
        <dbReference type="ChEBI" id="CHEBI:74480"/>
        <dbReference type="EC" id="2.1.1.170"/>
    </reaction>
</comment>
<comment type="subcellular location">
    <subcellularLocation>
        <location evidence="1">Cytoplasm</location>
    </subcellularLocation>
</comment>
<comment type="similarity">
    <text evidence="1">Belongs to the methyltransferase superfamily. RNA methyltransferase RsmG family.</text>
</comment>